<dbReference type="EC" id="3.1.-.-" evidence="1"/>
<dbReference type="EMBL" id="CT573213">
    <property type="protein sequence ID" value="CAJ64217.1"/>
    <property type="molecule type" value="Genomic_DNA"/>
</dbReference>
<dbReference type="RefSeq" id="WP_009742515.1">
    <property type="nucleotide sequence ID" value="NC_008278.1"/>
</dbReference>
<dbReference type="SMR" id="Q0RE94"/>
<dbReference type="STRING" id="326424.FRAAL5584"/>
<dbReference type="KEGG" id="fal:FRAAL5584"/>
<dbReference type="eggNOG" id="COG1343">
    <property type="taxonomic scope" value="Bacteria"/>
</dbReference>
<dbReference type="HOGENOM" id="CLU_161124_0_1_11"/>
<dbReference type="OrthoDB" id="9798176at2"/>
<dbReference type="Proteomes" id="UP000000657">
    <property type="component" value="Chromosome"/>
</dbReference>
<dbReference type="GO" id="GO:0046872">
    <property type="term" value="F:metal ion binding"/>
    <property type="evidence" value="ECO:0007669"/>
    <property type="project" value="UniProtKB-UniRule"/>
</dbReference>
<dbReference type="GO" id="GO:0004521">
    <property type="term" value="F:RNA endonuclease activity"/>
    <property type="evidence" value="ECO:0007669"/>
    <property type="project" value="InterPro"/>
</dbReference>
<dbReference type="GO" id="GO:0051607">
    <property type="term" value="P:defense response to virus"/>
    <property type="evidence" value="ECO:0007669"/>
    <property type="project" value="UniProtKB-UniRule"/>
</dbReference>
<dbReference type="GO" id="GO:0043571">
    <property type="term" value="P:maintenance of CRISPR repeat elements"/>
    <property type="evidence" value="ECO:0007669"/>
    <property type="project" value="UniProtKB-UniRule"/>
</dbReference>
<dbReference type="CDD" id="cd09725">
    <property type="entry name" value="Cas2_I_II_III"/>
    <property type="match status" value="1"/>
</dbReference>
<dbReference type="Gene3D" id="3.30.70.240">
    <property type="match status" value="1"/>
</dbReference>
<dbReference type="HAMAP" id="MF_01471">
    <property type="entry name" value="Cas2"/>
    <property type="match status" value="1"/>
</dbReference>
<dbReference type="InterPro" id="IPR021127">
    <property type="entry name" value="CRISPR_associated_Cas2"/>
</dbReference>
<dbReference type="InterPro" id="IPR019199">
    <property type="entry name" value="Virulence_VapD/CRISPR_Cas2"/>
</dbReference>
<dbReference type="NCBIfam" id="TIGR01573">
    <property type="entry name" value="cas2"/>
    <property type="match status" value="1"/>
</dbReference>
<dbReference type="PANTHER" id="PTHR34405">
    <property type="entry name" value="CRISPR-ASSOCIATED ENDORIBONUCLEASE CAS2"/>
    <property type="match status" value="1"/>
</dbReference>
<dbReference type="Pfam" id="PF09827">
    <property type="entry name" value="CRISPR_Cas2"/>
    <property type="match status" value="1"/>
</dbReference>
<dbReference type="SUPFAM" id="SSF143430">
    <property type="entry name" value="TTP0101/SSO1404-like"/>
    <property type="match status" value="1"/>
</dbReference>
<organism>
    <name type="scientific">Frankia alni (strain DSM 45986 / CECT 9034 / ACN14a)</name>
    <dbReference type="NCBI Taxonomy" id="326424"/>
    <lineage>
        <taxon>Bacteria</taxon>
        <taxon>Bacillati</taxon>
        <taxon>Actinomycetota</taxon>
        <taxon>Actinomycetes</taxon>
        <taxon>Frankiales</taxon>
        <taxon>Frankiaceae</taxon>
        <taxon>Frankia</taxon>
    </lineage>
</organism>
<reference key="1">
    <citation type="journal article" date="2007" name="Genome Res.">
        <title>Genome characteristics of facultatively symbiotic Frankia sp. strains reflect host range and host plant biogeography.</title>
        <authorList>
            <person name="Normand P."/>
            <person name="Lapierre P."/>
            <person name="Tisa L.S."/>
            <person name="Gogarten J.P."/>
            <person name="Alloisio N."/>
            <person name="Bagnarol E."/>
            <person name="Bassi C.A."/>
            <person name="Berry A.M."/>
            <person name="Bickhart D.M."/>
            <person name="Choisne N."/>
            <person name="Couloux A."/>
            <person name="Cournoyer B."/>
            <person name="Cruveiller S."/>
            <person name="Daubin V."/>
            <person name="Demange N."/>
            <person name="Francino M.P."/>
            <person name="Goltsman E."/>
            <person name="Huang Y."/>
            <person name="Kopp O.R."/>
            <person name="Labarre L."/>
            <person name="Lapidus A."/>
            <person name="Lavire C."/>
            <person name="Marechal J."/>
            <person name="Martinez M."/>
            <person name="Mastronunzio J.E."/>
            <person name="Mullin B.C."/>
            <person name="Niemann J."/>
            <person name="Pujic P."/>
            <person name="Rawnsley T."/>
            <person name="Rouy Z."/>
            <person name="Schenowitz C."/>
            <person name="Sellstedt A."/>
            <person name="Tavares F."/>
            <person name="Tomkins J.P."/>
            <person name="Vallenet D."/>
            <person name="Valverde C."/>
            <person name="Wall L.G."/>
            <person name="Wang Y."/>
            <person name="Medigue C."/>
            <person name="Benson D.R."/>
        </authorList>
    </citation>
    <scope>NUCLEOTIDE SEQUENCE [LARGE SCALE GENOMIC DNA]</scope>
    <source>
        <strain>DSM 45986 / CECT 9034 / ACN14a</strain>
    </source>
</reference>
<protein>
    <recommendedName>
        <fullName evidence="1">CRISPR-associated endoribonuclease Cas2</fullName>
        <ecNumber evidence="1">3.1.-.-</ecNumber>
    </recommendedName>
</protein>
<comment type="function">
    <text evidence="1">CRISPR (clustered regularly interspaced short palindromic repeat), is an adaptive immune system that provides protection against mobile genetic elements (viruses, transposable elements and conjugative plasmids). CRISPR clusters contain sequences complementary to antecedent mobile elements and target invading nucleic acids. CRISPR clusters are transcribed and processed into CRISPR RNA (crRNA). Functions as a ssRNA-specific endoribonuclease. Involved in the integration of spacer DNA into the CRISPR cassette.</text>
</comment>
<comment type="cofactor">
    <cofactor evidence="1">
        <name>Mg(2+)</name>
        <dbReference type="ChEBI" id="CHEBI:18420"/>
    </cofactor>
</comment>
<comment type="subunit">
    <text evidence="1">Homodimer, forms a heterotetramer with a Cas1 homodimer.</text>
</comment>
<comment type="similarity">
    <text evidence="1">Belongs to the CRISPR-associated endoribonuclease Cas2 protein family.</text>
</comment>
<gene>
    <name evidence="1" type="primary">cas2</name>
    <name type="ordered locus">FRAAL5584</name>
</gene>
<feature type="chain" id="PRO_0000417713" description="CRISPR-associated endoribonuclease Cas2">
    <location>
        <begin position="1"/>
        <end position="87"/>
    </location>
</feature>
<feature type="binding site" evidence="1">
    <location>
        <position position="8"/>
    </location>
    <ligand>
        <name>Mg(2+)</name>
        <dbReference type="ChEBI" id="CHEBI:18420"/>
        <note>catalytic</note>
    </ligand>
</feature>
<sequence length="87" mass="10080">MFVVLVYDTAAERNPNALRTCRKYLHWVQRSVFEGELSAAQYRALMTTLRDQLDLTYDSIRVYRTRSPALVETEWLGVPLGNQDSVL</sequence>
<proteinExistence type="inferred from homology"/>
<evidence type="ECO:0000255" key="1">
    <source>
        <dbReference type="HAMAP-Rule" id="MF_01471"/>
    </source>
</evidence>
<keyword id="KW-0051">Antiviral defense</keyword>
<keyword id="KW-0255">Endonuclease</keyword>
<keyword id="KW-0378">Hydrolase</keyword>
<keyword id="KW-0460">Magnesium</keyword>
<keyword id="KW-0479">Metal-binding</keyword>
<keyword id="KW-0540">Nuclease</keyword>
<keyword id="KW-1185">Reference proteome</keyword>
<accession>Q0RE94</accession>
<name>CAS2_FRAAA</name>